<dbReference type="EC" id="2.3.1.48" evidence="2"/>
<dbReference type="EMBL" id="Z29095">
    <property type="protein sequence ID" value="CAA82353.3"/>
    <property type="molecule type" value="Genomic_DNA"/>
</dbReference>
<dbReference type="EMBL" id="Z29095">
    <property type="protein sequence ID" value="CAD18875.2"/>
    <property type="molecule type" value="Genomic_DNA"/>
</dbReference>
<dbReference type="EMBL" id="Z29095">
    <property type="protein sequence ID" value="CAP72377.2"/>
    <property type="molecule type" value="Genomic_DNA"/>
</dbReference>
<dbReference type="PIR" id="G88564">
    <property type="entry name" value="G88564"/>
</dbReference>
<dbReference type="PIR" id="S60123">
    <property type="entry name" value="S60123"/>
</dbReference>
<dbReference type="RefSeq" id="NP_001122711.2">
    <molecule id="P34545-3"/>
    <property type="nucleotide sequence ID" value="NM_001129239.3"/>
</dbReference>
<dbReference type="RefSeq" id="NP_499160.2">
    <molecule id="P34545-1"/>
    <property type="nucleotide sequence ID" value="NM_066759.5"/>
</dbReference>
<dbReference type="RefSeq" id="NP_499161.2">
    <molecule id="P34545-2"/>
    <property type="nucleotide sequence ID" value="NM_066760.8"/>
</dbReference>
<dbReference type="SMR" id="P34545"/>
<dbReference type="BioGRID" id="41575">
    <property type="interactions" value="17"/>
</dbReference>
<dbReference type="ComplexPortal" id="CPX-1131">
    <property type="entry name" value="Prmt-5-cep-1-cbp-1 complex"/>
</dbReference>
<dbReference type="FunCoup" id="P34545">
    <property type="interactions" value="3289"/>
</dbReference>
<dbReference type="STRING" id="6239.R10E11.1b.1"/>
<dbReference type="iPTMnet" id="P34545"/>
<dbReference type="PaxDb" id="6239-R10E11.1b"/>
<dbReference type="PeptideAtlas" id="P34545"/>
<dbReference type="EnsemblMetazoa" id="R10E11.1a.1">
    <molecule id="P34545-2"/>
    <property type="protein sequence ID" value="R10E11.1a.1"/>
    <property type="gene ID" value="WBGene00000366"/>
</dbReference>
<dbReference type="EnsemblMetazoa" id="R10E11.1a.2">
    <molecule id="P34545-2"/>
    <property type="protein sequence ID" value="R10E11.1a.2"/>
    <property type="gene ID" value="WBGene00000366"/>
</dbReference>
<dbReference type="EnsemblMetazoa" id="R10E11.1b.1">
    <molecule id="P34545-1"/>
    <property type="protein sequence ID" value="R10E11.1b.1"/>
    <property type="gene ID" value="WBGene00000366"/>
</dbReference>
<dbReference type="EnsemblMetazoa" id="R10E11.1c.1">
    <molecule id="P34545-3"/>
    <property type="protein sequence ID" value="R10E11.1c.1"/>
    <property type="gene ID" value="WBGene00000366"/>
</dbReference>
<dbReference type="GeneID" id="176380"/>
<dbReference type="KEGG" id="cel:CELE_R10E11.1"/>
<dbReference type="UCSC" id="R10E11.1c">
    <molecule id="P34545-1"/>
    <property type="organism name" value="c. elegans"/>
</dbReference>
<dbReference type="AGR" id="WB:WBGene00000366"/>
<dbReference type="CTD" id="176380"/>
<dbReference type="WormBase" id="R10E11.1a">
    <molecule id="P34545-2"/>
    <property type="protein sequence ID" value="CE47039"/>
    <property type="gene ID" value="WBGene00000366"/>
    <property type="gene designation" value="cbp-1"/>
</dbReference>
<dbReference type="WormBase" id="R10E11.1b">
    <molecule id="P34545-1"/>
    <property type="protein sequence ID" value="CE46860"/>
    <property type="gene ID" value="WBGene00000366"/>
    <property type="gene designation" value="cbp-1"/>
</dbReference>
<dbReference type="WormBase" id="R10E11.1c">
    <molecule id="P34545-3"/>
    <property type="protein sequence ID" value="CE46909"/>
    <property type="gene ID" value="WBGene00000366"/>
    <property type="gene designation" value="cbp-1"/>
</dbReference>
<dbReference type="eggNOG" id="KOG1778">
    <property type="taxonomic scope" value="Eukaryota"/>
</dbReference>
<dbReference type="GeneTree" id="ENSGT00940000166210"/>
<dbReference type="InParanoid" id="P34545"/>
<dbReference type="OMA" id="LMMHHAY"/>
<dbReference type="OrthoDB" id="899at2759"/>
<dbReference type="PhylomeDB" id="P34545"/>
<dbReference type="Reactome" id="R-CEL-1234158">
    <property type="pathway name" value="Regulation of gene expression by Hypoxia-inducible Factor"/>
</dbReference>
<dbReference type="Reactome" id="R-CEL-201722">
    <property type="pathway name" value="Formation of the beta-catenin:TCF transactivating complex"/>
</dbReference>
<dbReference type="Reactome" id="R-CEL-3899300">
    <property type="pathway name" value="SUMOylation of transcription cofactors"/>
</dbReference>
<dbReference type="Reactome" id="R-CEL-5250924">
    <property type="pathway name" value="B-WICH complex positively regulates rRNA expression"/>
</dbReference>
<dbReference type="Reactome" id="R-CEL-5689901">
    <property type="pathway name" value="Metalloprotease DUBs"/>
</dbReference>
<dbReference type="Reactome" id="R-CEL-8936459">
    <property type="pathway name" value="RUNX1 regulates genes involved in megakaryocyte differentiation and platelet function"/>
</dbReference>
<dbReference type="Reactome" id="R-CEL-8939243">
    <property type="pathway name" value="RUNX1 interacts with co-factors whose precise effect on RUNX1 targets is not known"/>
</dbReference>
<dbReference type="Reactome" id="R-CEL-8939246">
    <property type="pathway name" value="RUNX1 regulates transcription of genes involved in differentiation of myeloid cells"/>
</dbReference>
<dbReference type="Reactome" id="R-CEL-8951936">
    <property type="pathway name" value="RUNX3 regulates p14-ARF"/>
</dbReference>
<dbReference type="Reactome" id="R-CEL-9617629">
    <property type="pathway name" value="Regulation of FOXO transcriptional activity by acetylation"/>
</dbReference>
<dbReference type="Reactome" id="R-CEL-9701898">
    <property type="pathway name" value="STAT3 nuclear events downstream of ALK signaling"/>
</dbReference>
<dbReference type="Reactome" id="R-CEL-9759194">
    <property type="pathway name" value="Nuclear events mediated by NFE2L2"/>
</dbReference>
<dbReference type="Reactome" id="R-CEL-9856649">
    <property type="pathway name" value="Transcriptional and post-translational regulation of MITF-M expression and activity"/>
</dbReference>
<dbReference type="SignaLink" id="P34545"/>
<dbReference type="PRO" id="PR:P34545"/>
<dbReference type="Proteomes" id="UP000001940">
    <property type="component" value="Chromosome III"/>
</dbReference>
<dbReference type="Bgee" id="WBGene00000366">
    <property type="expression patterns" value="Expressed in pharyngeal muscle cell (C elegans) and 4 other cell types or tissues"/>
</dbReference>
<dbReference type="GO" id="GO:0005737">
    <property type="term" value="C:cytoplasm"/>
    <property type="evidence" value="ECO:0000314"/>
    <property type="project" value="WormBase"/>
</dbReference>
<dbReference type="GO" id="GO:0000123">
    <property type="term" value="C:histone acetyltransferase complex"/>
    <property type="evidence" value="ECO:0000318"/>
    <property type="project" value="GO_Central"/>
</dbReference>
<dbReference type="GO" id="GO:0005634">
    <property type="term" value="C:nucleus"/>
    <property type="evidence" value="ECO:0000314"/>
    <property type="project" value="WormBase"/>
</dbReference>
<dbReference type="GO" id="GO:0005667">
    <property type="term" value="C:transcription regulator complex"/>
    <property type="evidence" value="ECO:0000318"/>
    <property type="project" value="GO_Central"/>
</dbReference>
<dbReference type="GO" id="GO:0017053">
    <property type="term" value="C:transcription repressor complex"/>
    <property type="evidence" value="ECO:0000353"/>
    <property type="project" value="ComplexPortal"/>
</dbReference>
<dbReference type="GO" id="GO:0031490">
    <property type="term" value="F:chromatin DNA binding"/>
    <property type="evidence" value="ECO:0000318"/>
    <property type="project" value="GO_Central"/>
</dbReference>
<dbReference type="GO" id="GO:0004402">
    <property type="term" value="F:histone acetyltransferase activity"/>
    <property type="evidence" value="ECO:0000314"/>
    <property type="project" value="WormBase"/>
</dbReference>
<dbReference type="GO" id="GO:0004468">
    <property type="term" value="F:L-lysine N-acetyltransferase activity, acting on acetyl phosphate as donor"/>
    <property type="evidence" value="ECO:0000314"/>
    <property type="project" value="WormBase"/>
</dbReference>
<dbReference type="GO" id="GO:0061733">
    <property type="term" value="F:protein-lysine-acetyltransferase activity"/>
    <property type="evidence" value="ECO:0000314"/>
    <property type="project" value="WormBase"/>
</dbReference>
<dbReference type="GO" id="GO:0061629">
    <property type="term" value="F:RNA polymerase II-specific DNA-binding transcription factor binding"/>
    <property type="evidence" value="ECO:0000353"/>
    <property type="project" value="WormBase"/>
</dbReference>
<dbReference type="GO" id="GO:0003713">
    <property type="term" value="F:transcription coactivator activity"/>
    <property type="evidence" value="ECO:0000318"/>
    <property type="project" value="GO_Central"/>
</dbReference>
<dbReference type="GO" id="GO:0008270">
    <property type="term" value="F:zinc ion binding"/>
    <property type="evidence" value="ECO:0007669"/>
    <property type="project" value="UniProtKB-KW"/>
</dbReference>
<dbReference type="GO" id="GO:0009792">
    <property type="term" value="P:embryo development ending in birth or egg hatching"/>
    <property type="evidence" value="ECO:0000315"/>
    <property type="project" value="WormBase"/>
</dbReference>
<dbReference type="GO" id="GO:0008630">
    <property type="term" value="P:intrinsic apoptotic signaling pathway in response to DNA damage"/>
    <property type="evidence" value="ECO:0000315"/>
    <property type="project" value="ComplexPortal"/>
</dbReference>
<dbReference type="GO" id="GO:0043065">
    <property type="term" value="P:positive regulation of apoptotic process"/>
    <property type="evidence" value="ECO:0000315"/>
    <property type="project" value="WormBase"/>
</dbReference>
<dbReference type="GO" id="GO:0045944">
    <property type="term" value="P:positive regulation of transcription by RNA polymerase II"/>
    <property type="evidence" value="ECO:0000316"/>
    <property type="project" value="WormBase"/>
</dbReference>
<dbReference type="GO" id="GO:1903354">
    <property type="term" value="P:regulation of distal tip cell migration"/>
    <property type="evidence" value="ECO:0000315"/>
    <property type="project" value="UniProtKB"/>
</dbReference>
<dbReference type="GO" id="GO:0006355">
    <property type="term" value="P:regulation of DNA-templated transcription"/>
    <property type="evidence" value="ECO:0000304"/>
    <property type="project" value="WormBase"/>
</dbReference>
<dbReference type="GO" id="GO:0010975">
    <property type="term" value="P:regulation of neuron projection development"/>
    <property type="evidence" value="ECO:0000315"/>
    <property type="project" value="WormBase"/>
</dbReference>
<dbReference type="GO" id="GO:0007283">
    <property type="term" value="P:spermatogenesis"/>
    <property type="evidence" value="ECO:0000315"/>
    <property type="project" value="WormBase"/>
</dbReference>
<dbReference type="CDD" id="cd05495">
    <property type="entry name" value="Bromo_cbp_like"/>
    <property type="match status" value="1"/>
</dbReference>
<dbReference type="CDD" id="cd15557">
    <property type="entry name" value="PHD_CBP_p300"/>
    <property type="match status" value="1"/>
</dbReference>
<dbReference type="CDD" id="cd15802">
    <property type="entry name" value="RING_CBP-p300"/>
    <property type="match status" value="1"/>
</dbReference>
<dbReference type="CDD" id="cd02337">
    <property type="entry name" value="ZZ_CBP"/>
    <property type="match status" value="1"/>
</dbReference>
<dbReference type="Gene3D" id="2.10.110.40">
    <property type="match status" value="1"/>
</dbReference>
<dbReference type="Gene3D" id="3.30.60.90">
    <property type="match status" value="1"/>
</dbReference>
<dbReference type="Gene3D" id="1.20.920.10">
    <property type="entry name" value="Bromodomain-like"/>
    <property type="match status" value="1"/>
</dbReference>
<dbReference type="Gene3D" id="1.10.246.20">
    <property type="entry name" value="Coactivator CBP, KIX domain"/>
    <property type="match status" value="1"/>
</dbReference>
<dbReference type="Gene3D" id="1.20.1020.10">
    <property type="entry name" value="TAZ domain"/>
    <property type="match status" value="2"/>
</dbReference>
<dbReference type="Gene3D" id="3.30.40.10">
    <property type="entry name" value="Zinc/RING finger domain, C3HC4 (zinc finger)"/>
    <property type="match status" value="1"/>
</dbReference>
<dbReference type="InterPro" id="IPR001487">
    <property type="entry name" value="Bromodomain"/>
</dbReference>
<dbReference type="InterPro" id="IPR036427">
    <property type="entry name" value="Bromodomain-like_sf"/>
</dbReference>
<dbReference type="InterPro" id="IPR018359">
    <property type="entry name" value="Bromodomain_CS"/>
</dbReference>
<dbReference type="InterPro" id="IPR031162">
    <property type="entry name" value="CBP_P300_HAT"/>
</dbReference>
<dbReference type="InterPro" id="IPR013178">
    <property type="entry name" value="Histone_AcTrfase_Rtt109/CBP"/>
</dbReference>
<dbReference type="InterPro" id="IPR003101">
    <property type="entry name" value="KIX_dom"/>
</dbReference>
<dbReference type="InterPro" id="IPR036529">
    <property type="entry name" value="KIX_dom_sf"/>
</dbReference>
<dbReference type="InterPro" id="IPR056484">
    <property type="entry name" value="PHD_P300"/>
</dbReference>
<dbReference type="InterPro" id="IPR010303">
    <property type="entry name" value="RING_CBP-p300"/>
</dbReference>
<dbReference type="InterPro" id="IPR038547">
    <property type="entry name" value="RING_CBP-p300_sf"/>
</dbReference>
<dbReference type="InterPro" id="IPR035898">
    <property type="entry name" value="TAZ_dom_sf"/>
</dbReference>
<dbReference type="InterPro" id="IPR013083">
    <property type="entry name" value="Znf_RING/FYVE/PHD"/>
</dbReference>
<dbReference type="InterPro" id="IPR000197">
    <property type="entry name" value="Znf_TAZ"/>
</dbReference>
<dbReference type="InterPro" id="IPR000433">
    <property type="entry name" value="Znf_ZZ"/>
</dbReference>
<dbReference type="InterPro" id="IPR043145">
    <property type="entry name" value="Znf_ZZ_sf"/>
</dbReference>
<dbReference type="PANTHER" id="PTHR13808">
    <property type="entry name" value="CBP/P300-RELATED"/>
    <property type="match status" value="1"/>
</dbReference>
<dbReference type="PANTHER" id="PTHR13808:SF1">
    <property type="entry name" value="HISTONE ACETYLTRANSFERASE"/>
    <property type="match status" value="1"/>
</dbReference>
<dbReference type="Pfam" id="PF00439">
    <property type="entry name" value="Bromodomain"/>
    <property type="match status" value="1"/>
</dbReference>
<dbReference type="Pfam" id="PF08214">
    <property type="entry name" value="HAT_KAT11"/>
    <property type="match status" value="1"/>
</dbReference>
<dbReference type="Pfam" id="PF02172">
    <property type="entry name" value="KIX"/>
    <property type="match status" value="1"/>
</dbReference>
<dbReference type="Pfam" id="PF23570">
    <property type="entry name" value="PHD_P300"/>
    <property type="match status" value="1"/>
</dbReference>
<dbReference type="Pfam" id="PF06001">
    <property type="entry name" value="RING_CBP-p300"/>
    <property type="match status" value="1"/>
</dbReference>
<dbReference type="Pfam" id="PF02135">
    <property type="entry name" value="zf-TAZ"/>
    <property type="match status" value="2"/>
</dbReference>
<dbReference type="Pfam" id="PF00569">
    <property type="entry name" value="ZZ"/>
    <property type="match status" value="1"/>
</dbReference>
<dbReference type="PRINTS" id="PR00503">
    <property type="entry name" value="BROMODOMAIN"/>
</dbReference>
<dbReference type="SMART" id="SM00297">
    <property type="entry name" value="BROMO"/>
    <property type="match status" value="1"/>
</dbReference>
<dbReference type="SMART" id="SM01250">
    <property type="entry name" value="KAT11"/>
    <property type="match status" value="1"/>
</dbReference>
<dbReference type="SMART" id="SM00551">
    <property type="entry name" value="ZnF_TAZ"/>
    <property type="match status" value="2"/>
</dbReference>
<dbReference type="SMART" id="SM00291">
    <property type="entry name" value="ZnF_ZZ"/>
    <property type="match status" value="1"/>
</dbReference>
<dbReference type="SUPFAM" id="SSF47370">
    <property type="entry name" value="Bromodomain"/>
    <property type="match status" value="1"/>
</dbReference>
<dbReference type="SUPFAM" id="SSF47040">
    <property type="entry name" value="Kix domain of CBP (creb binding protein)"/>
    <property type="match status" value="1"/>
</dbReference>
<dbReference type="SUPFAM" id="SSF57850">
    <property type="entry name" value="RING/U-box"/>
    <property type="match status" value="1"/>
</dbReference>
<dbReference type="SUPFAM" id="SSF57933">
    <property type="entry name" value="TAZ domain"/>
    <property type="match status" value="2"/>
</dbReference>
<dbReference type="PROSITE" id="PS00633">
    <property type="entry name" value="BROMODOMAIN_1"/>
    <property type="match status" value="1"/>
</dbReference>
<dbReference type="PROSITE" id="PS50014">
    <property type="entry name" value="BROMODOMAIN_2"/>
    <property type="match status" value="1"/>
</dbReference>
<dbReference type="PROSITE" id="PS51727">
    <property type="entry name" value="CBP_P300_HAT"/>
    <property type="match status" value="1"/>
</dbReference>
<dbReference type="PROSITE" id="PS50952">
    <property type="entry name" value="KIX"/>
    <property type="match status" value="1"/>
</dbReference>
<dbReference type="PROSITE" id="PS01359">
    <property type="entry name" value="ZF_PHD_1"/>
    <property type="match status" value="1"/>
</dbReference>
<dbReference type="PROSITE" id="PS50134">
    <property type="entry name" value="ZF_TAZ"/>
    <property type="match status" value="2"/>
</dbReference>
<dbReference type="PROSITE" id="PS01357">
    <property type="entry name" value="ZF_ZZ_1"/>
    <property type="match status" value="1"/>
</dbReference>
<dbReference type="PROSITE" id="PS50135">
    <property type="entry name" value="ZF_ZZ_2"/>
    <property type="match status" value="1"/>
</dbReference>
<gene>
    <name type="primary">cbp-1</name>
    <name type="ORF">R10E11.1</name>
</gene>
<protein>
    <recommendedName>
        <fullName>Protein cbp-1</fullName>
        <ecNumber evidence="2">2.3.1.48</ecNumber>
    </recommendedName>
</protein>
<organism>
    <name type="scientific">Caenorhabditis elegans</name>
    <dbReference type="NCBI Taxonomy" id="6239"/>
    <lineage>
        <taxon>Eukaryota</taxon>
        <taxon>Metazoa</taxon>
        <taxon>Ecdysozoa</taxon>
        <taxon>Nematoda</taxon>
        <taxon>Chromadorea</taxon>
        <taxon>Rhabditida</taxon>
        <taxon>Rhabditina</taxon>
        <taxon>Rhabditomorpha</taxon>
        <taxon>Rhabditoidea</taxon>
        <taxon>Rhabditidae</taxon>
        <taxon>Peloderinae</taxon>
        <taxon>Caenorhabditis</taxon>
    </lineage>
</organism>
<reference key="1">
    <citation type="journal article" date="1994" name="Nature">
        <title>2.2 Mb of contiguous nucleotide sequence from chromosome III of C. elegans.</title>
        <authorList>
            <person name="Wilson R."/>
            <person name="Ainscough R."/>
            <person name="Anderson K."/>
            <person name="Baynes C."/>
            <person name="Berks M."/>
            <person name="Bonfield J."/>
            <person name="Burton J."/>
            <person name="Connell M."/>
            <person name="Copsey T."/>
            <person name="Cooper J."/>
            <person name="Coulson A."/>
            <person name="Craxton M."/>
            <person name="Dear S."/>
            <person name="Du Z."/>
            <person name="Durbin R."/>
            <person name="Favello A."/>
            <person name="Fraser A."/>
            <person name="Fulton L."/>
            <person name="Gardner A."/>
            <person name="Green P."/>
            <person name="Hawkins T."/>
            <person name="Hillier L."/>
            <person name="Jier M."/>
            <person name="Johnston L."/>
            <person name="Jones M."/>
            <person name="Kershaw J."/>
            <person name="Kirsten J."/>
            <person name="Laisster N."/>
            <person name="Latreille P."/>
            <person name="Lightning J."/>
            <person name="Lloyd C."/>
            <person name="Mortimore B."/>
            <person name="O'Callaghan M."/>
            <person name="Parsons J."/>
            <person name="Percy C."/>
            <person name="Rifken L."/>
            <person name="Roopra A."/>
            <person name="Saunders D."/>
            <person name="Shownkeen R."/>
            <person name="Sims M."/>
            <person name="Smaldon N."/>
            <person name="Smith A."/>
            <person name="Smith M."/>
            <person name="Sonnhammer E."/>
            <person name="Staden R."/>
            <person name="Sulston J."/>
            <person name="Thierry-Mieg J."/>
            <person name="Thomas K."/>
            <person name="Vaudin M."/>
            <person name="Vaughan K."/>
            <person name="Waterston R."/>
            <person name="Watson A."/>
            <person name="Weinstock L."/>
            <person name="Wilkinson-Sproat J."/>
            <person name="Wohldman P."/>
        </authorList>
    </citation>
    <scope>NUCLEOTIDE SEQUENCE [LARGE SCALE GENOMIC DNA]</scope>
    <source>
        <strain>Bristol N2</strain>
    </source>
</reference>
<reference key="2">
    <citation type="journal article" date="1998" name="Science">
        <title>Genome sequence of the nematode C. elegans: a platform for investigating biology.</title>
        <authorList>
            <consortium name="The C. elegans sequencing consortium"/>
        </authorList>
    </citation>
    <scope>NUCLEOTIDE SEQUENCE [LARGE SCALE GENOMIC DNA]</scope>
    <scope>ALTERNATIVE SPLICING</scope>
    <source>
        <strain>Bristol N2</strain>
    </source>
</reference>
<reference key="3">
    <citation type="journal article" date="2009" name="PLoS Genet.">
        <title>Caenorhabditis elegans protein arginine methyltransferase PRMT-5 negatively regulates DNA damage-induced apoptosis.</title>
        <authorList>
            <person name="Yang M."/>
            <person name="Sun J."/>
            <person name="Sun X."/>
            <person name="Shen Q."/>
            <person name="Gao Z."/>
            <person name="Yang C."/>
        </authorList>
    </citation>
    <scope>FUNCTION</scope>
    <scope>INTERACTION WITH PRMT-5 AND CEP-1</scope>
    <scope>MUTAGENESIS OF ARG-234</scope>
    <scope>METHYLATION AT ARG-234</scope>
</reference>
<reference evidence="13" key="4">
    <citation type="journal article" date="2014" name="Dev. Dyn.">
        <title>Transcriptionally regulated cell adhesion network dictates distal tip cell directionality.</title>
        <authorList>
            <person name="Wong M.C."/>
            <person name="Kennedy W.P."/>
            <person name="Schwarzbauer J.E."/>
        </authorList>
    </citation>
    <scope>FUNCTION</scope>
    <scope>DEVELOPMENTAL STAGE</scope>
    <scope>DISRUPTION PHENOTYPE</scope>
</reference>
<reference evidence="13" key="5">
    <citation type="journal article" date="2019" name="Nature">
        <title>Active chromatin marks drive spatial sequestration of heterochromatin in C. elegans nuclei.</title>
        <authorList>
            <person name="Cabianca D.S."/>
            <person name="Munoz-Jimenez C."/>
            <person name="Kalck V."/>
            <person name="Gaidatzis D."/>
            <person name="Padeken J."/>
            <person name="Seeber A."/>
            <person name="Askjaer P."/>
            <person name="Gasser S.M."/>
        </authorList>
    </citation>
    <scope>FUNCTION</scope>
    <scope>DISRUPTION PHENOTYPE</scope>
</reference>
<keyword id="KW-0010">Activator</keyword>
<keyword id="KW-0012">Acyltransferase</keyword>
<keyword id="KW-0025">Alternative splicing</keyword>
<keyword id="KW-0053">Apoptosis</keyword>
<keyword id="KW-0103">Bromodomain</keyword>
<keyword id="KW-0156">Chromatin regulator</keyword>
<keyword id="KW-0479">Metal-binding</keyword>
<keyword id="KW-0488">Methylation</keyword>
<keyword id="KW-0539">Nucleus</keyword>
<keyword id="KW-1185">Reference proteome</keyword>
<keyword id="KW-0677">Repeat</keyword>
<keyword id="KW-0804">Transcription</keyword>
<keyword id="KW-0805">Transcription regulation</keyword>
<keyword id="KW-0808">Transferase</keyword>
<keyword id="KW-0862">Zinc</keyword>
<keyword id="KW-0863">Zinc-finger</keyword>
<comment type="function">
    <text evidence="2 10 11 12">Acetyltransferase enzyme (By similarity). Acetylates histones, giving a specific tag for transcriptional activation (By similarity). May prevent DNA damage-induced apoptosis by inhibiting cep-1-dependent transcription activation of the programmed cell death activator egl-1 (PubMed:19521535). In differentiated cells, negatively regulates localization of heterochromatin to the nuclear periphery (PubMed:31118512). Plays a role in migration of gonadal distal tip cells, where it probably modulates expression of genes involved in integrin-mediated adhesion (PubMed:24811939).</text>
</comment>
<comment type="catalytic activity">
    <reaction evidence="2">
        <text>L-lysyl-[protein] + acetyl-CoA = N(6)-acetyl-L-lysyl-[protein] + CoA + H(+)</text>
        <dbReference type="Rhea" id="RHEA:45948"/>
        <dbReference type="Rhea" id="RHEA-COMP:9752"/>
        <dbReference type="Rhea" id="RHEA-COMP:10731"/>
        <dbReference type="ChEBI" id="CHEBI:15378"/>
        <dbReference type="ChEBI" id="CHEBI:29969"/>
        <dbReference type="ChEBI" id="CHEBI:57287"/>
        <dbReference type="ChEBI" id="CHEBI:57288"/>
        <dbReference type="ChEBI" id="CHEBI:61930"/>
        <dbReference type="EC" id="2.3.1.48"/>
    </reaction>
</comment>
<comment type="subunit">
    <text evidence="9 12">Interacts (via N-terminus domain and HAT domain) with prmt-5; the interaction results in methylation of cbp-1 (PubMed:19521535). Interacts (via HAT domain) with cep-1; cep-1 transcriptional activity may be inhibited by interaction with methylated cbp-1 (PubMed:19521535). Component of a complex that contains prmt-5 and cbp-1 (PubMed:19521535).</text>
</comment>
<comment type="subcellular location">
    <subcellularLocation>
        <location evidence="2">Nucleus</location>
    </subcellularLocation>
</comment>
<comment type="alternative products">
    <event type="alternative splicing"/>
    <isoform>
        <id>P34545-1</id>
        <name>b</name>
        <sequence type="displayed"/>
    </isoform>
    <isoform>
        <id>P34545-2</id>
        <name>a</name>
        <sequence type="described" ref="VSP_000557"/>
    </isoform>
    <isoform>
        <id>P34545-3</id>
        <name>c</name>
        <sequence type="described" ref="VSP_000557 VSP_044149"/>
    </isoform>
</comment>
<comment type="developmental stage">
    <text evidence="10">Expressed in the gonadal distal tip cells (DTC) during larval stages L2, L3 and L4.</text>
</comment>
<comment type="PTM">
    <text evidence="12">Methylation by prmt-5 may repress the capacity of cbp-1 to enhance cep-1-dependent transcription of egl-1.</text>
</comment>
<comment type="disruption phenotype">
    <text evidence="10 11">RNAi-mediated knockdown targeted to the gonadal distal tip cells (DTC) causes DTC migration defects (PubMed:24811939). Significant reduction in expression of src-1, tln-1 and nmy-2 in DTCs (PubMed:24811939). RNAi-mediated knockdown on an mrg-1;cec-4 double mutant background restores positioning of heterochromatin to the nuclear periphery (PubMed:31118512).</text>
</comment>
<proteinExistence type="evidence at protein level"/>
<sequence>MDEPPSKKSRADSDYDSGLDALSALESLEAFPTSSKDTDVDNNPSTSAGGSGGPSGSTPHPQGTPQPAPSNNGGFNLQPGQSQPQQPPQNMGGGVNGSVLQELLMNPSQTSNNSPRPQAYPPGQQNAFNRSPMMPNGTPNMMSPPSMGRVPGPSPGGPQPPGPGQPQMRPGQPGMFQGDQQQQMMMGAQGQQFPGMMHRYPYAQGGPPPGAQGMPQGYPGVSRGGPTPGQPMGRGAMMNGAMPRSGPMPTQGRPGIPPNQQAMMQPMMTDRQFMQHGQYGQQRPEFMQQYGRPGGYPMMHQGMMMDSNGQPIRGPNQMMMMSNGHPGMSHGPPNGQPGPQAAAAQHAAQQQAAAQAQAQAAAQQQQQQQREQEAAAAAQRNGAGRATTPGSSMLATHQDPEKRKLIQQQLVLLLHAHKCSQREKENRDFAAKNQPPPHAACTLPHCSTMKEVLTHMTSCNVGRLCHSDTTQTTKKCSVAHCASSRQIIAHWKNCSREDCPVCKPLKRIQDTPLQFSLPDLANLIGVNGNSNGSAEGDGLHQFGSPAMRTGNITNSLFEGFNGNPFQNGPNRGGPRPPGGNGEIPNLPPPDMPDCTKEWHHQVTKDLRNHLVGKLVKAIFPEPNQEAMNDNRLKDLIAYARKVEKEMFESANDREEYYHLLAEKIYKIQKELQEKKNSRLNQGAAAHDQYAIPPSNELAQMLGVEGGRSDVHSEGSSMAVAPSQQNQPWGGAPNSNMHQQIPPNGQVPQVNNSSTFPSSGNSTPNIGASSTVSAMLQPKTEPMDDQNTDSLSSRPPTAIGFGGSSSSTPAPIMNGIVKKEEDPEESSNQAPPSVKDTKDGVAESKPKEQQAKREPTPPPTEDTVFSQEDLIKFLLPVWEKLDKSEDAAPFRVPVDAKLLNIPDYHEIIKRPMDLETVHKKLYAGQYQNAGQFCDDIWLMLDNAWLYNRKNSKVYKYGLKLSEMFVSEMDPVMKSMGYCCAKKLAFTPLSLFCYGAAMCTIAREQQYWVFEQSSTQYNVTVTERYTYCQKCFDALPPEGISLSENPNDRNNMAPKTSFTEQKNSVIDYEPFERCKYCMRKWHRICALHDKKVYPEGFICECCRTAKKYQKPDNKYLASKLPHNKLSTFLEDRVNGFIKKQLQAEAHKYPVIIRTLCVQDKEAEVKAQMKQKYVESNQFPEKFPYRTKAVFAFEIIDGVEVCFFGLHVQEYGSACPAPNARRVYIAYLDSVHFFQPRELRTDVYHELLLGYLDYAKMLGYTMAHIWACPPSEGDDYIFHCHPPEQKIPKPKRLQDWYKKMLEKGVQEGSVVEFKDIYKQARDDNLTTPTQLPYFEGDFWPNVIEDCIREASNEEAQRKVKEDDDDGEDADGGLGGGDSGKKKSSKNKKNNLKKNAKMNKKKAGSITGNEVADKLYSQFEKHKEVFFTIRLVSLQNEPAVLAKPISDPDGLMQSDMMDGRDTFLTKAREEHWEFSSLRRAKYSTLCLAYSLHETDSKGMEYTCNKCSSPAVWHCQSCDDFDLCDGCKPTTQHPHEMEKIKSLIGGGEAGDSAAGGTRYESIQRCIASLVHACQCRDANCRRMSCHKMKRVVQHTKMCKKRINGTCPVCKQLIALCCYHAKHCTRDACTVPFCMNIRQKLAEQKRSQQRRADMMMRRRMEGLQSHVGGAAPTPSTVSNGTPSNAPTPPVSAGPGPAVKGGGVGQVQMQQHQGSHVGGSGPAGMGQPMNSFGGMPGMGLGPNAQNGPGLPGMNPQMNANQSRYMPNGPGLGQSGAPGQQQQPMYSSGMPMQRPGGLGGMNPQQQPQQQQGHPGLQNPGGRPGGVHGMGQNQPVRNNQDMVMNMQMQNQHQQPPPFDSTLQPQIMKINSRLKAAKTEEERETVFSDLKKTPHLFHAWLRMRENQNLVPNRMQGYSQMSMGSSNLQNLQQQQLQQQQAGAMRGGGGFAPGQNNSQPRAPSGQFASMNPSMQQQYPQQQQGWPQQRQQNPGGMQQNANPYNQFQNRQNMMMMPQQQQPHPSNAGGQ</sequence>
<feature type="chain" id="PRO_0000211189" description="Protein cbp-1">
    <location>
        <begin position="1"/>
        <end position="2017"/>
    </location>
</feature>
<feature type="domain" description="KIX" evidence="6">
    <location>
        <begin position="593"/>
        <end position="672"/>
    </location>
</feature>
<feature type="domain" description="Bromo" evidence="3">
    <location>
        <begin position="864"/>
        <end position="970"/>
    </location>
</feature>
<feature type="domain" description="CBP/p300-type HAT" evidence="7">
    <location>
        <begin position="1112"/>
        <end position="1492"/>
    </location>
</feature>
<feature type="zinc finger region" description="TAZ-type 1" evidence="4">
    <location>
        <begin position="399"/>
        <end position="505"/>
    </location>
</feature>
<feature type="zinc finger region" description="ZZ-type" evidence="5">
    <location>
        <begin position="1494"/>
        <end position="1540"/>
    </location>
</feature>
<feature type="zinc finger region" description="TAZ-type 2" evidence="4">
    <location>
        <begin position="1550"/>
        <end position="1631"/>
    </location>
</feature>
<feature type="region of interest" description="Disordered" evidence="8">
    <location>
        <begin position="1"/>
        <end position="182"/>
    </location>
</feature>
<feature type="region of interest" description="Disordered" evidence="8">
    <location>
        <begin position="307"/>
        <end position="398"/>
    </location>
</feature>
<feature type="region of interest" description="Disordered" evidence="8">
    <location>
        <begin position="558"/>
        <end position="593"/>
    </location>
</feature>
<feature type="region of interest" description="Disordered" evidence="8">
    <location>
        <begin position="706"/>
        <end position="864"/>
    </location>
</feature>
<feature type="region of interest" description="Interaction with histone" evidence="2">
    <location>
        <begin position="902"/>
        <end position="948"/>
    </location>
</feature>
<feature type="region of interest" description="Interaction with histone" evidence="1">
    <location>
        <begin position="1224"/>
        <end position="1226"/>
    </location>
</feature>
<feature type="region of interest" description="Disordered" evidence="8">
    <location>
        <begin position="1349"/>
        <end position="1401"/>
    </location>
</feature>
<feature type="region of interest" description="Disordered" evidence="8">
    <location>
        <begin position="1656"/>
        <end position="1828"/>
    </location>
</feature>
<feature type="region of interest" description="Disordered" evidence="8">
    <location>
        <begin position="1908"/>
        <end position="2017"/>
    </location>
</feature>
<feature type="compositionally biased region" description="Basic and acidic residues" evidence="8">
    <location>
        <begin position="1"/>
        <end position="13"/>
    </location>
</feature>
<feature type="compositionally biased region" description="Low complexity" evidence="8">
    <location>
        <begin position="21"/>
        <end position="30"/>
    </location>
</feature>
<feature type="compositionally biased region" description="Low complexity" evidence="8">
    <location>
        <begin position="78"/>
        <end position="90"/>
    </location>
</feature>
<feature type="compositionally biased region" description="Polar residues" evidence="8">
    <location>
        <begin position="106"/>
        <end position="116"/>
    </location>
</feature>
<feature type="compositionally biased region" description="Low complexity" evidence="8">
    <location>
        <begin position="141"/>
        <end position="151"/>
    </location>
</feature>
<feature type="compositionally biased region" description="Pro residues" evidence="8">
    <location>
        <begin position="152"/>
        <end position="164"/>
    </location>
</feature>
<feature type="compositionally biased region" description="Low complexity" evidence="8">
    <location>
        <begin position="165"/>
        <end position="182"/>
    </location>
</feature>
<feature type="compositionally biased region" description="Low complexity" evidence="8">
    <location>
        <begin position="340"/>
        <end position="379"/>
    </location>
</feature>
<feature type="compositionally biased region" description="Low complexity" evidence="8">
    <location>
        <begin position="559"/>
        <end position="573"/>
    </location>
</feature>
<feature type="compositionally biased region" description="Polar residues" evidence="8">
    <location>
        <begin position="721"/>
        <end position="773"/>
    </location>
</feature>
<feature type="compositionally biased region" description="Basic and acidic residues" evidence="8">
    <location>
        <begin position="834"/>
        <end position="854"/>
    </location>
</feature>
<feature type="compositionally biased region" description="Basic and acidic residues" evidence="8">
    <location>
        <begin position="1349"/>
        <end position="1358"/>
    </location>
</feature>
<feature type="compositionally biased region" description="Basic residues" evidence="8">
    <location>
        <begin position="1378"/>
        <end position="1399"/>
    </location>
</feature>
<feature type="compositionally biased region" description="Polar residues" evidence="8">
    <location>
        <begin position="1667"/>
        <end position="1678"/>
    </location>
</feature>
<feature type="compositionally biased region" description="Low complexity" evidence="8">
    <location>
        <begin position="1699"/>
        <end position="1708"/>
    </location>
</feature>
<feature type="compositionally biased region" description="Polar residues" evidence="8">
    <location>
        <begin position="1748"/>
        <end position="1757"/>
    </location>
</feature>
<feature type="compositionally biased region" description="Low complexity" evidence="8">
    <location>
        <begin position="1793"/>
        <end position="1812"/>
    </location>
</feature>
<feature type="compositionally biased region" description="Low complexity" evidence="8">
    <location>
        <begin position="1908"/>
        <end position="1932"/>
    </location>
</feature>
<feature type="compositionally biased region" description="Polar residues" evidence="8">
    <location>
        <begin position="1943"/>
        <end position="1962"/>
    </location>
</feature>
<feature type="compositionally biased region" description="Low complexity" evidence="8">
    <location>
        <begin position="1963"/>
        <end position="2017"/>
    </location>
</feature>
<feature type="binding site" evidence="1">
    <location>
        <begin position="1225"/>
        <end position="1227"/>
    </location>
    <ligand>
        <name>acetyl-CoA</name>
        <dbReference type="ChEBI" id="CHEBI:57288"/>
    </ligand>
</feature>
<feature type="binding site" evidence="1">
    <location>
        <begin position="1237"/>
        <end position="1238"/>
    </location>
    <ligand>
        <name>acetyl-CoA</name>
        <dbReference type="ChEBI" id="CHEBI:57288"/>
    </ligand>
</feature>
<feature type="binding site" evidence="1">
    <location>
        <position position="1284"/>
    </location>
    <ligand>
        <name>acetyl-CoA</name>
        <dbReference type="ChEBI" id="CHEBI:57288"/>
    </ligand>
</feature>
<feature type="binding site" evidence="1">
    <location>
        <position position="1289"/>
    </location>
    <ligand>
        <name>acetyl-CoA</name>
        <dbReference type="ChEBI" id="CHEBI:57288"/>
    </ligand>
</feature>
<feature type="binding site" evidence="1">
    <location>
        <position position="1293"/>
    </location>
    <ligand>
        <name>acetyl-CoA</name>
        <dbReference type="ChEBI" id="CHEBI:57288"/>
    </ligand>
</feature>
<feature type="binding site" evidence="5">
    <location>
        <position position="1499"/>
    </location>
    <ligand>
        <name>Zn(2+)</name>
        <dbReference type="ChEBI" id="CHEBI:29105"/>
        <label>1</label>
    </ligand>
</feature>
<feature type="binding site" evidence="5">
    <location>
        <position position="1502"/>
    </location>
    <ligand>
        <name>Zn(2+)</name>
        <dbReference type="ChEBI" id="CHEBI:29105"/>
        <label>1</label>
    </ligand>
</feature>
<feature type="binding site" evidence="5">
    <location>
        <position position="1510"/>
    </location>
    <ligand>
        <name>Zn(2+)</name>
        <dbReference type="ChEBI" id="CHEBI:29105"/>
        <label>2</label>
    </ligand>
</feature>
<feature type="binding site" evidence="5">
    <location>
        <position position="1513"/>
    </location>
    <ligand>
        <name>Zn(2+)</name>
        <dbReference type="ChEBI" id="CHEBI:29105"/>
        <label>2</label>
    </ligand>
</feature>
<feature type="binding site" evidence="5">
    <location>
        <position position="1519"/>
    </location>
    <ligand>
        <name>Zn(2+)</name>
        <dbReference type="ChEBI" id="CHEBI:29105"/>
        <label>1</label>
    </ligand>
</feature>
<feature type="binding site" evidence="5">
    <location>
        <position position="1522"/>
    </location>
    <ligand>
        <name>Zn(2+)</name>
        <dbReference type="ChEBI" id="CHEBI:29105"/>
        <label>1</label>
    </ligand>
</feature>
<feature type="binding site" evidence="5">
    <location>
        <position position="1528"/>
    </location>
    <ligand>
        <name>Zn(2+)</name>
        <dbReference type="ChEBI" id="CHEBI:29105"/>
        <label>2</label>
    </ligand>
</feature>
<feature type="binding site" evidence="5">
    <location>
        <position position="1530"/>
    </location>
    <ligand>
        <name>Zn(2+)</name>
        <dbReference type="ChEBI" id="CHEBI:29105"/>
        <label>2</label>
    </ligand>
</feature>
<feature type="modified residue" description="Symmetric dimethylarginine; by PRMT5; in vitro" evidence="9">
    <location>
        <position position="234"/>
    </location>
</feature>
<feature type="splice variant" id="VSP_000557" description="In isoform a and isoform c." evidence="13">
    <original>SDTTQTTKKCSV</original>
    <variation>F</variation>
    <location>
        <begin position="467"/>
        <end position="478"/>
    </location>
</feature>
<feature type="splice variant" id="VSP_044149" description="In isoform c." evidence="13">
    <location>
        <begin position="1893"/>
        <end position="1921"/>
    </location>
</feature>
<feature type="mutagenesis site" description="Loss of methylation by prmt-5." evidence="9">
    <original>R</original>
    <variation>A</variation>
    <location>
        <position position="234"/>
    </location>
</feature>
<accession>P34545</accession>
<accession>B0M0M3</accession>
<name>CBP1_CAEEL</name>
<evidence type="ECO:0000250" key="1">
    <source>
        <dbReference type="UniProtKB" id="Q09472"/>
    </source>
</evidence>
<evidence type="ECO:0000250" key="2">
    <source>
        <dbReference type="UniProtKB" id="Q92793"/>
    </source>
</evidence>
<evidence type="ECO:0000255" key="3">
    <source>
        <dbReference type="PROSITE-ProRule" id="PRU00035"/>
    </source>
</evidence>
<evidence type="ECO:0000255" key="4">
    <source>
        <dbReference type="PROSITE-ProRule" id="PRU00203"/>
    </source>
</evidence>
<evidence type="ECO:0000255" key="5">
    <source>
        <dbReference type="PROSITE-ProRule" id="PRU00228"/>
    </source>
</evidence>
<evidence type="ECO:0000255" key="6">
    <source>
        <dbReference type="PROSITE-ProRule" id="PRU00311"/>
    </source>
</evidence>
<evidence type="ECO:0000255" key="7">
    <source>
        <dbReference type="PROSITE-ProRule" id="PRU01065"/>
    </source>
</evidence>
<evidence type="ECO:0000256" key="8">
    <source>
        <dbReference type="SAM" id="MobiDB-lite"/>
    </source>
</evidence>
<evidence type="ECO:0000269" key="9">
    <source>
    </source>
</evidence>
<evidence type="ECO:0000269" key="10">
    <source>
    </source>
</evidence>
<evidence type="ECO:0000269" key="11">
    <source>
    </source>
</evidence>
<evidence type="ECO:0000303" key="12">
    <source>
    </source>
</evidence>
<evidence type="ECO:0000305" key="13"/>